<accession>A2RNM6</accession>
<protein>
    <recommendedName>
        <fullName evidence="1">Large ribosomal subunit protein bL17</fullName>
    </recommendedName>
    <alternativeName>
        <fullName evidence="2">50S ribosomal protein L17</fullName>
    </alternativeName>
</protein>
<gene>
    <name evidence="1" type="primary">rplQ</name>
    <name type="ordered locus">llmg_2353</name>
</gene>
<keyword id="KW-0002">3D-structure</keyword>
<keyword id="KW-0687">Ribonucleoprotein</keyword>
<keyword id="KW-0689">Ribosomal protein</keyword>
<feature type="chain" id="PRO_1000055854" description="Large ribosomal subunit protein bL17">
    <location>
        <begin position="1"/>
        <end position="126"/>
    </location>
</feature>
<sequence length="126" mass="14255">MSNRKLGRTSSQRKAMLRDLTTDLIINETIVTTEARAKEVRRTVEKMITLGKKGDLSARRAAAAYVRNEIAIKDFNEETETFPTALQKLFNDLAKRYEGRNGGYTRILKVEPRRGDAAPMAIIELV</sequence>
<dbReference type="EMBL" id="AM406671">
    <property type="protein sequence ID" value="CAL98917.1"/>
    <property type="molecule type" value="Genomic_DNA"/>
</dbReference>
<dbReference type="RefSeq" id="WP_003130558.1">
    <property type="nucleotide sequence ID" value="NZ_WJVF01000005.1"/>
</dbReference>
<dbReference type="PDB" id="5MYJ">
    <property type="method" value="EM"/>
    <property type="resolution" value="5.60 A"/>
    <property type="chains" value="BQ=1-126"/>
</dbReference>
<dbReference type="PDBsum" id="5MYJ"/>
<dbReference type="EMDB" id="EMD-3581"/>
<dbReference type="SMR" id="A2RNM6"/>
<dbReference type="STRING" id="416870.llmg_2353"/>
<dbReference type="GeneID" id="89634419"/>
<dbReference type="KEGG" id="llm:llmg_2353"/>
<dbReference type="eggNOG" id="COG0203">
    <property type="taxonomic scope" value="Bacteria"/>
</dbReference>
<dbReference type="HOGENOM" id="CLU_074407_2_2_9"/>
<dbReference type="OrthoDB" id="9809073at2"/>
<dbReference type="PhylomeDB" id="A2RNM6"/>
<dbReference type="Proteomes" id="UP000000364">
    <property type="component" value="Chromosome"/>
</dbReference>
<dbReference type="GO" id="GO:0022625">
    <property type="term" value="C:cytosolic large ribosomal subunit"/>
    <property type="evidence" value="ECO:0007669"/>
    <property type="project" value="TreeGrafter"/>
</dbReference>
<dbReference type="GO" id="GO:0003735">
    <property type="term" value="F:structural constituent of ribosome"/>
    <property type="evidence" value="ECO:0007669"/>
    <property type="project" value="InterPro"/>
</dbReference>
<dbReference type="GO" id="GO:0006412">
    <property type="term" value="P:translation"/>
    <property type="evidence" value="ECO:0007669"/>
    <property type="project" value="UniProtKB-UniRule"/>
</dbReference>
<dbReference type="FunFam" id="3.90.1030.10:FF:000002">
    <property type="entry name" value="50S ribosomal protein L17"/>
    <property type="match status" value="1"/>
</dbReference>
<dbReference type="Gene3D" id="3.90.1030.10">
    <property type="entry name" value="Ribosomal protein L17"/>
    <property type="match status" value="1"/>
</dbReference>
<dbReference type="HAMAP" id="MF_01368">
    <property type="entry name" value="Ribosomal_bL17"/>
    <property type="match status" value="1"/>
</dbReference>
<dbReference type="InterPro" id="IPR000456">
    <property type="entry name" value="Ribosomal_bL17"/>
</dbReference>
<dbReference type="InterPro" id="IPR047859">
    <property type="entry name" value="Ribosomal_bL17_CS"/>
</dbReference>
<dbReference type="InterPro" id="IPR036373">
    <property type="entry name" value="Ribosomal_bL17_sf"/>
</dbReference>
<dbReference type="NCBIfam" id="TIGR00059">
    <property type="entry name" value="L17"/>
    <property type="match status" value="1"/>
</dbReference>
<dbReference type="PANTHER" id="PTHR14413:SF16">
    <property type="entry name" value="LARGE RIBOSOMAL SUBUNIT PROTEIN BL17M"/>
    <property type="match status" value="1"/>
</dbReference>
<dbReference type="PANTHER" id="PTHR14413">
    <property type="entry name" value="RIBOSOMAL PROTEIN L17"/>
    <property type="match status" value="1"/>
</dbReference>
<dbReference type="Pfam" id="PF01196">
    <property type="entry name" value="Ribosomal_L17"/>
    <property type="match status" value="1"/>
</dbReference>
<dbReference type="SUPFAM" id="SSF64263">
    <property type="entry name" value="Prokaryotic ribosomal protein L17"/>
    <property type="match status" value="1"/>
</dbReference>
<dbReference type="PROSITE" id="PS01167">
    <property type="entry name" value="RIBOSOMAL_L17"/>
    <property type="match status" value="1"/>
</dbReference>
<proteinExistence type="evidence at protein level"/>
<comment type="subunit">
    <text evidence="1">Part of the 50S ribosomal subunit. Contacts protein L32.</text>
</comment>
<comment type="similarity">
    <text evidence="1">Belongs to the bacterial ribosomal protein bL17 family.</text>
</comment>
<organism>
    <name type="scientific">Lactococcus lactis subsp. cremoris (strain MG1363)</name>
    <dbReference type="NCBI Taxonomy" id="416870"/>
    <lineage>
        <taxon>Bacteria</taxon>
        <taxon>Bacillati</taxon>
        <taxon>Bacillota</taxon>
        <taxon>Bacilli</taxon>
        <taxon>Lactobacillales</taxon>
        <taxon>Streptococcaceae</taxon>
        <taxon>Lactococcus</taxon>
        <taxon>Lactococcus cremoris subsp. cremoris</taxon>
    </lineage>
</organism>
<name>RL17_LACLM</name>
<evidence type="ECO:0000255" key="1">
    <source>
        <dbReference type="HAMAP-Rule" id="MF_01368"/>
    </source>
</evidence>
<evidence type="ECO:0000305" key="2"/>
<reference key="1">
    <citation type="journal article" date="2007" name="J. Bacteriol.">
        <title>The complete genome sequence of the lactic acid bacterial paradigm Lactococcus lactis subsp. cremoris MG1363.</title>
        <authorList>
            <person name="Wegmann U."/>
            <person name="O'Connell-Motherway M."/>
            <person name="Zomer A."/>
            <person name="Buist G."/>
            <person name="Shearman C."/>
            <person name="Canchaya C."/>
            <person name="Ventura M."/>
            <person name="Goesmann A."/>
            <person name="Gasson M.J."/>
            <person name="Kuipers O.P."/>
            <person name="van Sinderen D."/>
            <person name="Kok J."/>
        </authorList>
    </citation>
    <scope>NUCLEOTIDE SEQUENCE [LARGE SCALE GENOMIC DNA]</scope>
    <source>
        <strain>MG1363</strain>
    </source>
</reference>